<accession>P15373</accession>
<accession>Q2M980</accession>
<proteinExistence type="evidence at protein level"/>
<reference key="1">
    <citation type="journal article" date="1990" name="J. Bacteriol.">
        <title>Increased expression of the bifunctional protein PrlF suppresses overproduction lethality associated with exported beta-galactosidase hybrid proteins in Escherichia coli.</title>
        <authorList>
            <person name="Kiino D.R."/>
            <person name="Phillips G.J."/>
            <person name="Silhavy T.J."/>
        </authorList>
    </citation>
    <scope>NUCLEOTIDE SEQUENCE [GENOMIC DNA]</scope>
    <scope>SUPPRESSION OF JAMMED SECRETION MACHINERY</scope>
    <scope>MUTAGENESIS OF 91-GLN--GLU-111</scope>
    <scope>DISRUPTION PHENOTYPE</scope>
    <source>
        <strain>K12</strain>
    </source>
</reference>
<reference key="2">
    <citation type="journal article" date="1990" name="J. Bacteriol.">
        <title>Identification, cloning, and characterization of the Escherichia coli sohA gene, a suppressor of the htrA (degP) null phenotype.</title>
        <authorList>
            <person name="Baird L."/>
            <person name="Georgopoulos C."/>
        </authorList>
    </citation>
    <scope>NUCLEOTIDE SEQUENCE [GENOMIC DNA]</scope>
    <scope>IDENTIFICATION</scope>
    <scope>SUPPRESSION OF AN HTRA NULL MUTANT</scope>
    <source>
        <strain>K12</strain>
    </source>
</reference>
<reference key="3">
    <citation type="journal article" date="1997" name="Science">
        <title>The complete genome sequence of Escherichia coli K-12.</title>
        <authorList>
            <person name="Blattner F.R."/>
            <person name="Plunkett G. III"/>
            <person name="Bloch C.A."/>
            <person name="Perna N.T."/>
            <person name="Burland V."/>
            <person name="Riley M."/>
            <person name="Collado-Vides J."/>
            <person name="Glasner J.D."/>
            <person name="Rode C.K."/>
            <person name="Mayhew G.F."/>
            <person name="Gregor J."/>
            <person name="Davis N.W."/>
            <person name="Kirkpatrick H.A."/>
            <person name="Goeden M.A."/>
            <person name="Rose D.J."/>
            <person name="Mau B."/>
            <person name="Shao Y."/>
        </authorList>
    </citation>
    <scope>NUCLEOTIDE SEQUENCE [LARGE SCALE GENOMIC DNA]</scope>
    <source>
        <strain>K12 / MG1655 / ATCC 47076</strain>
    </source>
</reference>
<reference key="4">
    <citation type="journal article" date="2006" name="Mol. Syst. Biol.">
        <title>Highly accurate genome sequences of Escherichia coli K-12 strains MG1655 and W3110.</title>
        <authorList>
            <person name="Hayashi K."/>
            <person name="Morooka N."/>
            <person name="Yamamoto Y."/>
            <person name="Fujita K."/>
            <person name="Isono K."/>
            <person name="Choi S."/>
            <person name="Ohtsubo E."/>
            <person name="Baba T."/>
            <person name="Wanner B.L."/>
            <person name="Mori H."/>
            <person name="Horiuchi T."/>
        </authorList>
    </citation>
    <scope>NUCLEOTIDE SEQUENCE [LARGE SCALE GENOMIC DNA]</scope>
    <source>
        <strain>K12 / W3110 / ATCC 27325 / DSM 5911</strain>
    </source>
</reference>
<reference key="5">
    <citation type="journal article" date="2007" name="J. Mol. Biol.">
        <title>prlF and yhaV encode a new toxin-antitoxin system in Escherichia coli.</title>
        <authorList>
            <person name="Schmidt O."/>
            <person name="Schuenemann V.J."/>
            <person name="Hand N.J."/>
            <person name="Silhavy T.J."/>
            <person name="Martin J."/>
            <person name="Lupas A.N."/>
            <person name="Djuranovic S."/>
        </authorList>
    </citation>
    <scope>FUNCTION AS AN ANTITOXIN</scope>
    <scope>SUBUNIT</scope>
    <scope>DNA-BINDING</scope>
    <scope>OPERON STRUCTURE</scope>
    <source>
        <strain>K12 / W3110 / ATCC 27325 / DSM 5911</strain>
    </source>
</reference>
<reference key="6">
    <citation type="journal article" date="2009" name="Prog. Mol. Biol. Transl. Sci.">
        <title>mRNA interferases, sequence-specific endoribonucleases from the toxin-antitoxin systems.</title>
        <authorList>
            <person name="Yamaguchi Y."/>
            <person name="Inouye M."/>
        </authorList>
    </citation>
    <scope>REVIEW</scope>
</reference>
<sequence length="111" mass="12359">MPANARSHAVLTTESKVTIRGQTTIPAPVREALKLKPGQDSIHYEILPGGQVFMCRLGDEQEDHTMNAFLRFLDADIQNNPQKTRPFNIQQGKKLVAGMDVNIDDEIGDDE</sequence>
<organism>
    <name type="scientific">Escherichia coli (strain K12)</name>
    <dbReference type="NCBI Taxonomy" id="83333"/>
    <lineage>
        <taxon>Bacteria</taxon>
        <taxon>Pseudomonadati</taxon>
        <taxon>Pseudomonadota</taxon>
        <taxon>Gammaproteobacteria</taxon>
        <taxon>Enterobacterales</taxon>
        <taxon>Enterobacteriaceae</taxon>
        <taxon>Escherichia</taxon>
    </lineage>
</organism>
<gene>
    <name type="primary">prlF</name>
    <name type="synonym">sohA</name>
    <name type="ordered locus">b3129</name>
    <name type="ordered locus">JW3098</name>
</gene>
<name>PRLF_ECOLI</name>
<evidence type="ECO:0000255" key="1">
    <source>
        <dbReference type="PROSITE-ProRule" id="PRU01076"/>
    </source>
</evidence>
<evidence type="ECO:0000269" key="2">
    <source>
    </source>
</evidence>
<evidence type="ECO:0000269" key="3">
    <source>
    </source>
</evidence>
<evidence type="ECO:0000305" key="4"/>
<feature type="chain" id="PRO_0000072033" description="Antitoxin PrlF">
    <location>
        <begin position="1"/>
        <end position="111"/>
    </location>
</feature>
<feature type="domain" description="SpoVT-AbrB" evidence="1">
    <location>
        <begin position="12"/>
        <end position="59"/>
    </location>
</feature>
<feature type="mutagenesis site" description="In prlF1; suppresses overproduction lethality of lamB-lacZ gene fusions, leads to decreased beta-galactosidase activity. Partially alleviates YhaV toxic activity." evidence="3">
    <original>QGKKLVAGMDVNIDDEIGDDE</original>
    <variation>HSTRKETCRWHGRQH</variation>
    <location>
        <begin position="91"/>
        <end position="111"/>
    </location>
</feature>
<dbReference type="EMBL" id="M30178">
    <property type="protein sequence ID" value="AAA24638.1"/>
    <property type="molecule type" value="Genomic_DNA"/>
</dbReference>
<dbReference type="EMBL" id="M32358">
    <property type="protein sequence ID" value="AAA24418.1"/>
    <property type="molecule type" value="Genomic_DNA"/>
</dbReference>
<dbReference type="EMBL" id="U18997">
    <property type="protein sequence ID" value="AAA57932.1"/>
    <property type="molecule type" value="Genomic_DNA"/>
</dbReference>
<dbReference type="EMBL" id="U00096">
    <property type="protein sequence ID" value="AAC76163.1"/>
    <property type="molecule type" value="Genomic_DNA"/>
</dbReference>
<dbReference type="EMBL" id="AP009048">
    <property type="protein sequence ID" value="BAE77176.1"/>
    <property type="molecule type" value="Genomic_DNA"/>
</dbReference>
<dbReference type="PIR" id="A35137">
    <property type="entry name" value="A35137"/>
</dbReference>
<dbReference type="RefSeq" id="NP_417598.1">
    <property type="nucleotide sequence ID" value="NC_000913.3"/>
</dbReference>
<dbReference type="RefSeq" id="WP_001307405.1">
    <property type="nucleotide sequence ID" value="NZ_STEB01000001.1"/>
</dbReference>
<dbReference type="SMR" id="P15373"/>
<dbReference type="BioGRID" id="4259492">
    <property type="interactions" value="403"/>
</dbReference>
<dbReference type="BioGRID" id="851952">
    <property type="interactions" value="3"/>
</dbReference>
<dbReference type="ComplexPortal" id="CPX-4102">
    <property type="entry name" value="PrlF-YhaV toxin-antitoxin complex"/>
</dbReference>
<dbReference type="FunCoup" id="P15373">
    <property type="interactions" value="38"/>
</dbReference>
<dbReference type="IntAct" id="P15373">
    <property type="interactions" value="6"/>
</dbReference>
<dbReference type="STRING" id="511145.b3129"/>
<dbReference type="jPOST" id="P15373"/>
<dbReference type="PaxDb" id="511145-b3129"/>
<dbReference type="DNASU" id="947639"/>
<dbReference type="EnsemblBacteria" id="AAC76163">
    <property type="protein sequence ID" value="AAC76163"/>
    <property type="gene ID" value="b3129"/>
</dbReference>
<dbReference type="GeneID" id="75203755"/>
<dbReference type="GeneID" id="947639"/>
<dbReference type="KEGG" id="ecj:JW3098"/>
<dbReference type="KEGG" id="eco:b3129"/>
<dbReference type="KEGG" id="ecoc:C3026_17055"/>
<dbReference type="PATRIC" id="fig|1411691.4.peg.3602"/>
<dbReference type="EchoBASE" id="EB0948"/>
<dbReference type="eggNOG" id="COG2002">
    <property type="taxonomic scope" value="Bacteria"/>
</dbReference>
<dbReference type="HOGENOM" id="CLU_143957_0_0_6"/>
<dbReference type="InParanoid" id="P15373"/>
<dbReference type="OMA" id="DKICYTI"/>
<dbReference type="OrthoDB" id="426345at2"/>
<dbReference type="PhylomeDB" id="P15373"/>
<dbReference type="BioCyc" id="EcoCyc:EG10955-MONOMER"/>
<dbReference type="BioCyc" id="MetaCyc:EG10955-MONOMER"/>
<dbReference type="PRO" id="PR:P15373"/>
<dbReference type="Proteomes" id="UP000000625">
    <property type="component" value="Chromosome"/>
</dbReference>
<dbReference type="GO" id="GO:0005737">
    <property type="term" value="C:cytoplasm"/>
    <property type="evidence" value="ECO:0007669"/>
    <property type="project" value="UniProtKB-SubCell"/>
</dbReference>
<dbReference type="GO" id="GO:0110001">
    <property type="term" value="C:toxin-antitoxin complex"/>
    <property type="evidence" value="ECO:0000353"/>
    <property type="project" value="ComplexPortal"/>
</dbReference>
<dbReference type="GO" id="GO:0003677">
    <property type="term" value="F:DNA binding"/>
    <property type="evidence" value="ECO:0007669"/>
    <property type="project" value="UniProtKB-KW"/>
</dbReference>
<dbReference type="GO" id="GO:0003700">
    <property type="term" value="F:DNA-binding transcription factor activity"/>
    <property type="evidence" value="ECO:0000314"/>
    <property type="project" value="EcoCyc"/>
</dbReference>
<dbReference type="GO" id="GO:0019899">
    <property type="term" value="F:enzyme binding"/>
    <property type="evidence" value="ECO:0000314"/>
    <property type="project" value="EcoCyc"/>
</dbReference>
<dbReference type="GO" id="GO:0042802">
    <property type="term" value="F:identical protein binding"/>
    <property type="evidence" value="ECO:0000314"/>
    <property type="project" value="EcoCyc"/>
</dbReference>
<dbReference type="GO" id="GO:0097351">
    <property type="term" value="F:toxin sequestering activity"/>
    <property type="evidence" value="ECO:0000353"/>
    <property type="project" value="EcoCyc"/>
</dbReference>
<dbReference type="GO" id="GO:0045892">
    <property type="term" value="P:negative regulation of DNA-templated transcription"/>
    <property type="evidence" value="ECO:0000314"/>
    <property type="project" value="EcoCyc"/>
</dbReference>
<dbReference type="GO" id="GO:0001558">
    <property type="term" value="P:regulation of cell growth"/>
    <property type="evidence" value="ECO:0000315"/>
    <property type="project" value="EcoCyc"/>
</dbReference>
<dbReference type="GO" id="GO:0006355">
    <property type="term" value="P:regulation of DNA-templated transcription"/>
    <property type="evidence" value="ECO:0000303"/>
    <property type="project" value="ComplexPortal"/>
</dbReference>
<dbReference type="GO" id="GO:0040008">
    <property type="term" value="P:regulation of growth"/>
    <property type="evidence" value="ECO:0000303"/>
    <property type="project" value="ComplexPortal"/>
</dbReference>
<dbReference type="GO" id="GO:0044010">
    <property type="term" value="P:single-species biofilm formation"/>
    <property type="evidence" value="ECO:0000314"/>
    <property type="project" value="ComplexPortal"/>
</dbReference>
<dbReference type="FunFam" id="2.10.260.10:FF:000003">
    <property type="entry name" value="Putative regulator PrlF"/>
    <property type="match status" value="1"/>
</dbReference>
<dbReference type="Gene3D" id="2.10.260.10">
    <property type="match status" value="1"/>
</dbReference>
<dbReference type="InterPro" id="IPR031848">
    <property type="entry name" value="PrlF_antitoxin"/>
</dbReference>
<dbReference type="InterPro" id="IPR007159">
    <property type="entry name" value="SpoVT-AbrB_dom"/>
</dbReference>
<dbReference type="InterPro" id="IPR037914">
    <property type="entry name" value="SpoVT-AbrB_sf"/>
</dbReference>
<dbReference type="NCBIfam" id="NF007429">
    <property type="entry name" value="PRK09974.1"/>
    <property type="match status" value="1"/>
</dbReference>
<dbReference type="Pfam" id="PF15937">
    <property type="entry name" value="PrlF_antitoxin"/>
    <property type="match status" value="1"/>
</dbReference>
<dbReference type="SUPFAM" id="SSF89447">
    <property type="entry name" value="AbrB/MazE/MraZ-like"/>
    <property type="match status" value="1"/>
</dbReference>
<dbReference type="PROSITE" id="PS51740">
    <property type="entry name" value="SPOVT_ABRB"/>
    <property type="match status" value="1"/>
</dbReference>
<comment type="function">
    <text evidence="2">Antitoxin component of a type II toxin-antitoxin (TA) system. Labile antitoxin that binds to the YhaV toxin and neutralizes its ribonuclease activity. Also acts as a transcription factor. The YhaV/PrlF complex binds the prlF-yhaV operon, probably negatively regulating its expression.</text>
</comment>
<comment type="function">
    <text evidence="2">Negatively regulates its own expression as well as relieving the export block imposed by high-level synthesis of the LamB-LacZ hybrid protein. Overexpression leads to increased doubling time and also suppresses a htrA (degP) null phenotype.</text>
</comment>
<comment type="subunit">
    <text evidence="2">Homodimer; forms a complex with YhaV with stoichiometry PrlF(2)-YhaV(4), possibly as a YhaV(2)-PrlF(2)-YhaV(2) complex like the MazFE complex. This complex is seen to dimerize in solution.</text>
</comment>
<comment type="subcellular location">
    <subcellularLocation>
        <location evidence="4">Cytoplasm</location>
    </subcellularLocation>
</comment>
<comment type="disruption phenotype">
    <text evidence="3">Not essential.</text>
</comment>
<keyword id="KW-0963">Cytoplasm</keyword>
<keyword id="KW-0238">DNA-binding</keyword>
<keyword id="KW-1185">Reference proteome</keyword>
<keyword id="KW-0678">Repressor</keyword>
<keyword id="KW-1277">Toxin-antitoxin system</keyword>
<keyword id="KW-0804">Transcription</keyword>
<keyword id="KW-0805">Transcription regulation</keyword>
<protein>
    <recommendedName>
        <fullName>Antitoxin PrlF</fullName>
    </recommendedName>
    <alternativeName>
        <fullName>HtrA suppressor protein SohA</fullName>
    </alternativeName>
</protein>